<organismHost>
    <name type="scientific">Homo sapiens</name>
    <name type="common">Human</name>
    <dbReference type="NCBI Taxonomy" id="9606"/>
</organismHost>
<sequence>MSCYTAILKSVGGLALFQDANGAIDLCRHFFMYFCEQKLRPNSFWFVVVRAIASMIMYLVLGIALLYISEQDDKKNTNNASNSNKLNESSINSNS</sequence>
<proteinExistence type="evidence at transcript level"/>
<feature type="signal peptide" evidence="2">
    <location>
        <begin position="1"/>
        <end position="22"/>
    </location>
</feature>
<feature type="chain" id="PRO_0000099228" description="Virion membrane protein OPG135">
    <location>
        <begin position="23"/>
        <end position="95"/>
    </location>
</feature>
<feature type="topological domain" description="Intravirion" evidence="2">
    <location>
        <begin position="23"/>
        <end position="45"/>
    </location>
</feature>
<feature type="transmembrane region" description="Helical" evidence="2">
    <location>
        <begin position="46"/>
        <end position="66"/>
    </location>
</feature>
<feature type="topological domain" description="Virion surface" evidence="2">
    <location>
        <begin position="67"/>
        <end position="83"/>
    </location>
</feature>
<feature type="region of interest" description="Disordered" evidence="3">
    <location>
        <begin position="76"/>
        <end position="95"/>
    </location>
</feature>
<feature type="compositionally biased region" description="Low complexity" evidence="3">
    <location>
        <begin position="77"/>
        <end position="95"/>
    </location>
</feature>
<feature type="glycosylation site" description="N-linked (GlcNAc...) asparagine; by host" evidence="2">
    <location>
        <position position="79"/>
    </location>
</feature>
<feature type="glycosylation site" description="N-linked (GlcNAc...) asparagine; by host" evidence="2">
    <location>
        <position position="87"/>
    </location>
</feature>
<name>PG135_VAR67</name>
<dbReference type="EMBL" id="X69198">
    <property type="protein sequence ID" value="CAA49054.1"/>
    <property type="molecule type" value="Genomic_DNA"/>
</dbReference>
<dbReference type="EMBL" id="X67116">
    <property type="protein sequence ID" value="CAA47516.1"/>
    <property type="molecule type" value="Genomic_DNA"/>
</dbReference>
<dbReference type="PIR" id="A36849">
    <property type="entry name" value="A36849"/>
</dbReference>
<dbReference type="RefSeq" id="NP_042157.1">
    <property type="nucleotide sequence ID" value="NC_001611.1"/>
</dbReference>
<dbReference type="SMR" id="P33835"/>
<dbReference type="GeneID" id="1486539"/>
<dbReference type="KEGG" id="vg:1486539"/>
<dbReference type="Proteomes" id="UP000002060">
    <property type="component" value="Segment"/>
</dbReference>
<dbReference type="GO" id="GO:0030430">
    <property type="term" value="C:host cell cytoplasm"/>
    <property type="evidence" value="ECO:0007669"/>
    <property type="project" value="UniProtKB-SubCell"/>
</dbReference>
<dbReference type="GO" id="GO:0016020">
    <property type="term" value="C:membrane"/>
    <property type="evidence" value="ECO:0007669"/>
    <property type="project" value="UniProtKB-KW"/>
</dbReference>
<dbReference type="GO" id="GO:0019031">
    <property type="term" value="C:viral envelope"/>
    <property type="evidence" value="ECO:0007669"/>
    <property type="project" value="UniProtKB-KW"/>
</dbReference>
<dbReference type="GO" id="GO:0055036">
    <property type="term" value="C:virion membrane"/>
    <property type="evidence" value="ECO:0007669"/>
    <property type="project" value="UniProtKB-SubCell"/>
</dbReference>
<dbReference type="InterPro" id="IPR006920">
    <property type="entry name" value="Poxvirus_A9"/>
</dbReference>
<dbReference type="Pfam" id="PF04835">
    <property type="entry name" value="Pox_A9"/>
    <property type="match status" value="1"/>
</dbReference>
<protein>
    <recommendedName>
        <fullName>Virion membrane protein OPG135</fullName>
    </recommendedName>
</protein>
<evidence type="ECO:0000250" key="1">
    <source>
        <dbReference type="UniProtKB" id="Q85320"/>
    </source>
</evidence>
<evidence type="ECO:0000255" key="2"/>
<evidence type="ECO:0000256" key="3">
    <source>
        <dbReference type="SAM" id="MobiDB-lite"/>
    </source>
</evidence>
<evidence type="ECO:0000305" key="4"/>
<reference key="1">
    <citation type="journal article" date="1991" name="Dokl. Akad. Nauk SSSR">
        <title>Creation of a clone library of fragments from the natural variola virus and study of the structural and functional organization of viral genes from a circle of hosts.</title>
        <authorList>
            <person name="Shchelkunov S.N."/>
            <person name="Marennikova S.S."/>
            <person name="Totmenin A.V."/>
            <person name="Blinov V.M."/>
            <person name="Chizhikov V.E."/>
            <person name="Gutorov V.V."/>
            <person name="Safronov P.F."/>
            <person name="Pozdnyakov S.G."/>
            <person name="Shelukhina E.M."/>
            <person name="Gashnikov P.V."/>
            <person name="Anjaparidze O.G."/>
            <person name="Sandakhchiev L.S."/>
        </authorList>
    </citation>
    <scope>NUCLEOTIDE SEQUENCE [GENOMIC DNA]</scope>
</reference>
<reference key="2">
    <citation type="journal article" date="1993" name="FEBS Lett.">
        <title>Genes of variola and vaccinia viruses necessary to overcome the host protective mechanisms.</title>
        <authorList>
            <person name="Shchelkunov S.N."/>
            <person name="Blinov V.M."/>
            <person name="Sandakhchiev L.S."/>
        </authorList>
    </citation>
    <scope>NUCLEOTIDE SEQUENCE [LARGE SCALE GENOMIC DNA]</scope>
</reference>
<accession>P33835</accession>
<comment type="function">
    <text evidence="1">Envelope protein. Required for an early step in virion morphogenesis.</text>
</comment>
<comment type="subcellular location">
    <subcellularLocation>
        <location evidence="1">Virion membrane</location>
        <topology evidence="1">Single-pass membrane protein</topology>
    </subcellularLocation>
    <subcellularLocation>
        <location evidence="1">Host cytoplasm</location>
    </subcellularLocation>
    <text evidence="1">Component of the mature virion (MV) membrane. The mature virion is located in the cytoplasm of infected cells and is probably released by cell lysis. Also found in cytoplasmic virus factories.</text>
</comment>
<comment type="induction">
    <text>Expressed in the late phase of the viral replicative cycle.</text>
</comment>
<comment type="similarity">
    <text evidence="4">Belongs to the oerthopoxvirus OPG135 family.</text>
</comment>
<gene>
    <name type="primary">OPG135</name>
    <name type="ORF">A9L</name>
</gene>
<organism>
    <name type="scientific">Variola virus (isolate Human/India/Ind3/1967)</name>
    <name type="common">VARV</name>
    <name type="synonym">Smallpox virus</name>
    <dbReference type="NCBI Taxonomy" id="587200"/>
    <lineage>
        <taxon>Viruses</taxon>
        <taxon>Varidnaviria</taxon>
        <taxon>Bamfordvirae</taxon>
        <taxon>Nucleocytoviricota</taxon>
        <taxon>Pokkesviricetes</taxon>
        <taxon>Chitovirales</taxon>
        <taxon>Poxviridae</taxon>
        <taxon>Chordopoxvirinae</taxon>
        <taxon>Orthopoxvirus</taxon>
        <taxon>Variola virus</taxon>
    </lineage>
</organism>
<keyword id="KW-0325">Glycoprotein</keyword>
<keyword id="KW-1035">Host cytoplasm</keyword>
<keyword id="KW-0426">Late protein</keyword>
<keyword id="KW-0472">Membrane</keyword>
<keyword id="KW-1185">Reference proteome</keyword>
<keyword id="KW-0732">Signal</keyword>
<keyword id="KW-0812">Transmembrane</keyword>
<keyword id="KW-1133">Transmembrane helix</keyword>
<keyword id="KW-0261">Viral envelope protein</keyword>
<keyword id="KW-0946">Virion</keyword>